<protein>
    <recommendedName>
        <fullName>Superoxide dismutase [Fe]</fullName>
        <ecNumber>1.15.1.1</ecNumber>
    </recommendedName>
</protein>
<feature type="initiator methionine" description="Removed" evidence="2 3">
    <location>
        <position position="1"/>
    </location>
</feature>
<feature type="chain" id="PRO_0000159995" description="Superoxide dismutase [Fe]">
    <location>
        <begin position="2"/>
        <end position="198"/>
    </location>
</feature>
<feature type="binding site" evidence="1">
    <location>
        <position position="27"/>
    </location>
    <ligand>
        <name>Fe(3+)</name>
        <dbReference type="ChEBI" id="CHEBI:29034"/>
    </ligand>
</feature>
<feature type="binding site" evidence="1">
    <location>
        <position position="74"/>
    </location>
    <ligand>
        <name>Fe(3+)</name>
        <dbReference type="ChEBI" id="CHEBI:29034"/>
    </ligand>
</feature>
<feature type="binding site" evidence="1">
    <location>
        <position position="157"/>
    </location>
    <ligand>
        <name>Fe(3+)</name>
        <dbReference type="ChEBI" id="CHEBI:29034"/>
    </ligand>
</feature>
<feature type="binding site" evidence="1">
    <location>
        <position position="161"/>
    </location>
    <ligand>
        <name>Fe(3+)</name>
        <dbReference type="ChEBI" id="CHEBI:29034"/>
    </ligand>
</feature>
<feature type="sequence conflict" description="In Ref. 3; AA sequence and 4; AA sequence." evidence="4" ref="3 4">
    <original>F</original>
    <variation>Y</variation>
    <location>
        <position position="26"/>
    </location>
</feature>
<feature type="sequence conflict" description="In Ref. 3; AA sequence." evidence="4" ref="3">
    <original>T</original>
    <variation>TP</variation>
    <location>
        <position position="46"/>
    </location>
</feature>
<feature type="sequence conflict" description="In Ref. 3; AA sequence." evidence="4" ref="3">
    <original>T</original>
    <variation>S</variation>
    <location>
        <position position="59"/>
    </location>
</feature>
<feature type="sequence conflict" description="In Ref. 3; AA sequence." evidence="4" ref="3">
    <original>APNA</original>
    <variation>SPDG</variation>
    <location>
        <begin position="82"/>
        <end position="85"/>
    </location>
</feature>
<feature type="sequence conflict" description="In Ref. 2; AAK14938." evidence="4" ref="2">
    <original>A</original>
    <variation>E</variation>
    <location>
        <position position="82"/>
    </location>
</feature>
<feature type="sequence conflict" description="In Ref. 2; AAK14938." evidence="4" ref="2">
    <original>A</original>
    <variation>S</variation>
    <location>
        <position position="85"/>
    </location>
</feature>
<feature type="sequence conflict" description="In Ref. 2; AAK14938." evidence="4" ref="2">
    <original>G</original>
    <variation>D</variation>
    <location>
        <position position="122"/>
    </location>
</feature>
<feature type="sequence conflict" description="In Ref. 3; AA sequence." evidence="4" ref="3">
    <original>G</original>
    <variation>A</variation>
    <location>
        <position position="124"/>
    </location>
</feature>
<feature type="sequence conflict" description="In Ref. 2; AAK14938." evidence="4" ref="2">
    <original>W</original>
    <variation>C</variation>
    <location>
        <position position="125"/>
    </location>
</feature>
<feature type="sequence conflict" description="In Ref. 3; AA sequence." evidence="4" ref="3">
    <location>
        <position position="129"/>
    </location>
</feature>
<feature type="sequence conflict" description="In Ref. 3; AA sequence." evidence="4" ref="3">
    <original>A</original>
    <variation>C</variation>
    <location>
        <position position="137"/>
    </location>
</feature>
<feature type="sequence conflict" description="In Ref. 3; AA sequence." evidence="4" ref="3">
    <original>C</original>
    <variation>A</variation>
    <location>
        <position position="144"/>
    </location>
</feature>
<feature type="sequence conflict" description="In Ref. 2; AAK14938." evidence="4" ref="2">
    <original>S</original>
    <variation>I</variation>
    <location>
        <position position="148"/>
    </location>
</feature>
<feature type="sequence conflict" description="In Ref. 3; AA sequence." evidence="4" ref="3">
    <location>
        <begin position="190"/>
        <end position="191"/>
    </location>
</feature>
<feature type="sequence conflict" description="In Ref. 2; AAK14938." evidence="4" ref="2">
    <original>FKA</original>
    <variation>YKV</variation>
    <location>
        <begin position="196"/>
        <end position="198"/>
    </location>
</feature>
<feature type="turn" evidence="7">
    <location>
        <begin position="12"/>
        <end position="18"/>
    </location>
</feature>
<feature type="helix" evidence="7">
    <location>
        <begin position="21"/>
        <end position="29"/>
    </location>
</feature>
<feature type="helix" evidence="7">
    <location>
        <begin position="31"/>
        <end position="42"/>
    </location>
</feature>
<feature type="helix" evidence="7">
    <location>
        <begin position="53"/>
        <end position="59"/>
    </location>
</feature>
<feature type="helix" evidence="7">
    <location>
        <begin position="62"/>
        <end position="79"/>
    </location>
</feature>
<feature type="helix" evidence="7">
    <location>
        <begin position="91"/>
        <end position="101"/>
    </location>
</feature>
<feature type="helix" evidence="7">
    <location>
        <begin position="104"/>
        <end position="116"/>
    </location>
</feature>
<feature type="strand" evidence="7">
    <location>
        <begin position="120"/>
        <end position="128"/>
    </location>
</feature>
<feature type="strand" evidence="8">
    <location>
        <begin position="130"/>
        <end position="132"/>
    </location>
</feature>
<feature type="strand" evidence="7">
    <location>
        <begin position="134"/>
        <end position="140"/>
    </location>
</feature>
<feature type="helix" evidence="7">
    <location>
        <begin position="145"/>
        <end position="148"/>
    </location>
</feature>
<feature type="strand" evidence="7">
    <location>
        <begin position="151"/>
        <end position="157"/>
    </location>
</feature>
<feature type="helix" evidence="7">
    <location>
        <begin position="160"/>
        <end position="162"/>
    </location>
</feature>
<feature type="helix" evidence="7">
    <location>
        <begin position="164"/>
        <end position="167"/>
    </location>
</feature>
<feature type="helix" evidence="7">
    <location>
        <begin position="171"/>
        <end position="178"/>
    </location>
</feature>
<feature type="turn" evidence="7">
    <location>
        <begin position="179"/>
        <end position="181"/>
    </location>
</feature>
<feature type="helix" evidence="7">
    <location>
        <begin position="184"/>
        <end position="191"/>
    </location>
</feature>
<feature type="strand" evidence="7">
    <location>
        <begin position="192"/>
        <end position="194"/>
    </location>
</feature>
<comment type="function">
    <text>Destroys superoxide anion radicals which are normally produced within the cells and which are toxic to biological systems.</text>
</comment>
<comment type="catalytic activity">
    <reaction>
        <text>2 superoxide + 2 H(+) = H2O2 + O2</text>
        <dbReference type="Rhea" id="RHEA:20696"/>
        <dbReference type="ChEBI" id="CHEBI:15378"/>
        <dbReference type="ChEBI" id="CHEBI:15379"/>
        <dbReference type="ChEBI" id="CHEBI:16240"/>
        <dbReference type="ChEBI" id="CHEBI:18421"/>
        <dbReference type="EC" id="1.15.1.1"/>
    </reaction>
</comment>
<comment type="cofactor">
    <cofactor evidence="1">
        <name>Fe(3+)</name>
        <dbReference type="ChEBI" id="CHEBI:29034"/>
    </cofactor>
    <text evidence="1">Binds 1 Fe (3+) cation per subunit.</text>
</comment>
<comment type="subunit">
    <text evidence="1">Homodimer.</text>
</comment>
<comment type="similarity">
    <text evidence="4">Belongs to the iron/manganese superoxide dismutase family.</text>
</comment>
<accession>P09223</accession>
<accession>P77928</accession>
<accession>Q9AIX5</accession>
<sequence>MAFELPPLPYAHDALQPHISKETLEFHHDKHHNTYVVNLNNLVPGTEFEGKTLEEIVKTSSGGIFNNAAQVWNHTFYWNCLAPNAGGQPTGALADAINAAFGSFDKFKEEFTKTSVGTFGSGWGWLVKKADGSLALASTIGAGCPLTSGDTPLLTCDVWEHAYYIDYRNLRPKYVEAFWNLVNWAFVAEQFEGKTFKA</sequence>
<name>SODF_PSEPU</name>
<reference key="1">
    <citation type="journal article" date="1999" name="Gene">
        <title>Transcriptional regulation by iron of genes encoding iron- and manganese-superoxide dismutases from Pseudomonas putida.</title>
        <authorList>
            <person name="Kim Y.C."/>
            <person name="Miller C.D."/>
            <person name="Anderson A.J."/>
        </authorList>
    </citation>
    <scope>NUCLEOTIDE SEQUENCE [GENOMIC DNA]</scope>
    <source>
        <strain>Corvallis</strain>
    </source>
</reference>
<reference evidence="5" key="2">
    <citation type="journal article" date="2000" name="Acta Crystallogr. D">
        <title>Cloning, sequence and crystallographic structure of recombinant iron superoxide dismutase from Pseudomonas ovalis.</title>
        <authorList>
            <person name="Bond C.J."/>
            <person name="Huang J.-Y."/>
            <person name="Hajduk R."/>
            <person name="Flick K.E."/>
            <person name="Heath P.J."/>
            <person name="Stoddard B.L."/>
        </authorList>
    </citation>
    <scope>NUCLEOTIDE SEQUENCE [GENOMIC DNA]</scope>
    <scope>X-RAY CRYSTALLOGRAPHY (2.10 ANGSTROMS) OF 2-197 IN COMPLEX WITH IRON</scope>
    <scope>COFACTOR</scope>
    <scope>SUBUNIT</scope>
    <source>
        <strain>Ovalis</strain>
    </source>
</reference>
<reference key="3">
    <citation type="journal article" date="1987" name="FEBS Lett.">
        <title>Amino acid sequence of iron-superoxide dismutase from Pseudomonas ovalis.</title>
        <authorList>
            <person name="Isobe T."/>
            <person name="Fang Y.-I."/>
            <person name="Muno D."/>
            <person name="Okuyama T."/>
            <person name="Ohmori D."/>
            <person name="Yamakura F."/>
        </authorList>
    </citation>
    <scope>PROTEIN SEQUENCE OF 2-198</scope>
    <source>
        <strain>Ovalis</strain>
    </source>
</reference>
<reference key="4">
    <citation type="journal article" date="1980" name="Eur. J. Biochem.">
        <title>Structural comparisons of superoxide dismutases.</title>
        <authorList>
            <person name="Harris J.I."/>
            <person name="Auffret A.D."/>
            <person name="Northrop F.D."/>
            <person name="Walker J.E."/>
        </authorList>
    </citation>
    <scope>PROTEIN SEQUENCE OF 2-36</scope>
    <source>
        <strain>Ovalis</strain>
    </source>
</reference>
<reference key="5">
    <citation type="journal article" date="1983" name="Proc. Natl. Acad. Sci. U.S.A.">
        <title>Structure of iron superoxide dismutase from Pseudomonas ovalis at 2.9-A resolution.</title>
        <authorList>
            <person name="Ringe D."/>
            <person name="Petsko G.A."/>
            <person name="Yamakura F."/>
            <person name="Suzuki K."/>
            <person name="Ohmori D."/>
        </authorList>
    </citation>
    <scope>X-RAY CRYSTALLOGRAPHY (2.9 ANGSTROMS)</scope>
    <source>
        <strain>Ovalis</strain>
    </source>
</reference>
<reference evidence="6" key="6">
    <citation type="journal article" date="1990" name="Biochemistry">
        <title>The 2.1-A resolution structure of iron superoxide dismutase from Pseudomonas ovalis.</title>
        <authorList>
            <person name="Stoddard B.L."/>
            <person name="Howell P.L."/>
            <person name="Ringe D."/>
            <person name="Petsko G.A."/>
        </authorList>
    </citation>
    <scope>X-RAY CRYSTALLOGRAPHY (2.1 ANGSTROMS)</scope>
    <source>
        <strain>Ovalis</strain>
    </source>
</reference>
<reference key="7">
    <citation type="journal article" date="1990" name="Protein Eng.">
        <title>The structure of iron superoxide dismutase from Pseudomonas ovalis complexed with the inhibitor azide.</title>
        <authorList>
            <person name="Stoddard B.L."/>
            <person name="Ringe D."/>
            <person name="Petsko G.A."/>
        </authorList>
    </citation>
    <scope>X-RAY CRYSTALLOGRAPHY (2.9 ANGSTROMS) OF COMPLEX WITH AZIDE</scope>
    <source>
        <strain>Ovalis</strain>
    </source>
</reference>
<evidence type="ECO:0000269" key="1">
    <source>
    </source>
</evidence>
<evidence type="ECO:0000269" key="2">
    <source>
    </source>
</evidence>
<evidence type="ECO:0000269" key="3">
    <source>
    </source>
</evidence>
<evidence type="ECO:0000305" key="4"/>
<evidence type="ECO:0007744" key="5">
    <source>
        <dbReference type="PDB" id="1DT0"/>
    </source>
</evidence>
<evidence type="ECO:0007744" key="6">
    <source>
        <dbReference type="PDB" id="3SDP"/>
    </source>
</evidence>
<evidence type="ECO:0007829" key="7">
    <source>
        <dbReference type="PDB" id="1DT0"/>
    </source>
</evidence>
<evidence type="ECO:0007829" key="8">
    <source>
        <dbReference type="PDB" id="3SDP"/>
    </source>
</evidence>
<gene>
    <name type="primary">sodB</name>
</gene>
<organism>
    <name type="scientific">Pseudomonas putida</name>
    <name type="common">Arthrobacter siderocapsulatus</name>
    <dbReference type="NCBI Taxonomy" id="303"/>
    <lineage>
        <taxon>Bacteria</taxon>
        <taxon>Pseudomonadati</taxon>
        <taxon>Pseudomonadota</taxon>
        <taxon>Gammaproteobacteria</taxon>
        <taxon>Pseudomonadales</taxon>
        <taxon>Pseudomonadaceae</taxon>
        <taxon>Pseudomonas</taxon>
    </lineage>
</organism>
<dbReference type="EC" id="1.15.1.1"/>
<dbReference type="EMBL" id="U64798">
    <property type="protein sequence ID" value="AAB06332.1"/>
    <property type="molecule type" value="Genomic_DNA"/>
</dbReference>
<dbReference type="EMBL" id="AF222862">
    <property type="protein sequence ID" value="AAK14938.1"/>
    <property type="molecule type" value="Genomic_DNA"/>
</dbReference>
<dbReference type="PIR" id="S00157">
    <property type="entry name" value="S00157"/>
</dbReference>
<dbReference type="RefSeq" id="WP_012274023.1">
    <property type="nucleotide sequence ID" value="NZ_RJAH01000002.1"/>
</dbReference>
<dbReference type="PDB" id="1DT0">
    <property type="method" value="X-ray"/>
    <property type="resolution" value="2.10 A"/>
    <property type="chains" value="A/B/C=2-195"/>
</dbReference>
<dbReference type="PDB" id="3SDP">
    <property type="method" value="X-ray"/>
    <property type="resolution" value="2.10 A"/>
    <property type="chains" value="A/B=2-198"/>
</dbReference>
<dbReference type="PDBsum" id="1DT0"/>
<dbReference type="PDBsum" id="3SDP"/>
<dbReference type="SMR" id="P09223"/>
<dbReference type="eggNOG" id="COG0605">
    <property type="taxonomic scope" value="Bacteria"/>
</dbReference>
<dbReference type="OrthoDB" id="9803125at2"/>
<dbReference type="BRENDA" id="1.15.1.1">
    <property type="organism ID" value="5092"/>
</dbReference>
<dbReference type="EvolutionaryTrace" id="P09223"/>
<dbReference type="GO" id="GO:0046872">
    <property type="term" value="F:metal ion binding"/>
    <property type="evidence" value="ECO:0007669"/>
    <property type="project" value="UniProtKB-KW"/>
</dbReference>
<dbReference type="GO" id="GO:0004784">
    <property type="term" value="F:superoxide dismutase activity"/>
    <property type="evidence" value="ECO:0007669"/>
    <property type="project" value="UniProtKB-EC"/>
</dbReference>
<dbReference type="FunFam" id="1.10.287.990:FF:000002">
    <property type="entry name" value="Superoxide dismutase"/>
    <property type="match status" value="1"/>
</dbReference>
<dbReference type="FunFam" id="3.55.40.20:FF:000001">
    <property type="entry name" value="Superoxide dismutase"/>
    <property type="match status" value="1"/>
</dbReference>
<dbReference type="Gene3D" id="1.10.287.990">
    <property type="entry name" value="Fe,Mn superoxide dismutase (SOD) domain"/>
    <property type="match status" value="1"/>
</dbReference>
<dbReference type="Gene3D" id="3.55.40.20">
    <property type="entry name" value="Iron/manganese superoxide dismutase, C-terminal domain"/>
    <property type="match status" value="1"/>
</dbReference>
<dbReference type="InterPro" id="IPR001189">
    <property type="entry name" value="Mn/Fe_SOD"/>
</dbReference>
<dbReference type="InterPro" id="IPR019833">
    <property type="entry name" value="Mn/Fe_SOD_BS"/>
</dbReference>
<dbReference type="InterPro" id="IPR019832">
    <property type="entry name" value="Mn/Fe_SOD_C"/>
</dbReference>
<dbReference type="InterPro" id="IPR019831">
    <property type="entry name" value="Mn/Fe_SOD_N"/>
</dbReference>
<dbReference type="InterPro" id="IPR036324">
    <property type="entry name" value="Mn/Fe_SOD_N_sf"/>
</dbReference>
<dbReference type="InterPro" id="IPR036314">
    <property type="entry name" value="SOD_C_sf"/>
</dbReference>
<dbReference type="PANTHER" id="PTHR42769">
    <property type="entry name" value="SUPEROXIDE DISMUTASE"/>
    <property type="match status" value="1"/>
</dbReference>
<dbReference type="PANTHER" id="PTHR42769:SF3">
    <property type="entry name" value="SUPEROXIDE DISMUTASE [FE] 2, CHLOROPLASTIC"/>
    <property type="match status" value="1"/>
</dbReference>
<dbReference type="Pfam" id="PF02777">
    <property type="entry name" value="Sod_Fe_C"/>
    <property type="match status" value="1"/>
</dbReference>
<dbReference type="Pfam" id="PF00081">
    <property type="entry name" value="Sod_Fe_N"/>
    <property type="match status" value="1"/>
</dbReference>
<dbReference type="PIRSF" id="PIRSF000349">
    <property type="entry name" value="SODismutase"/>
    <property type="match status" value="1"/>
</dbReference>
<dbReference type="PRINTS" id="PR01703">
    <property type="entry name" value="MNSODISMTASE"/>
</dbReference>
<dbReference type="SUPFAM" id="SSF54719">
    <property type="entry name" value="Fe,Mn superoxide dismutase (SOD), C-terminal domain"/>
    <property type="match status" value="1"/>
</dbReference>
<dbReference type="SUPFAM" id="SSF46609">
    <property type="entry name" value="Fe,Mn superoxide dismutase (SOD), N-terminal domain"/>
    <property type="match status" value="1"/>
</dbReference>
<dbReference type="PROSITE" id="PS00088">
    <property type="entry name" value="SOD_MN"/>
    <property type="match status" value="1"/>
</dbReference>
<proteinExistence type="evidence at protein level"/>
<keyword id="KW-0002">3D-structure</keyword>
<keyword id="KW-0903">Direct protein sequencing</keyword>
<keyword id="KW-0408">Iron</keyword>
<keyword id="KW-0479">Metal-binding</keyword>
<keyword id="KW-0560">Oxidoreductase</keyword>